<proteinExistence type="evidence at transcript level"/>
<name>GDL1_ARATH</name>
<dbReference type="EC" id="3.1.1.-"/>
<dbReference type="EMBL" id="AC067971">
    <property type="protein sequence ID" value="AAF82220.1"/>
    <property type="status" value="ALT_INIT"/>
    <property type="molecule type" value="Genomic_DNA"/>
</dbReference>
<dbReference type="EMBL" id="CP002684">
    <property type="protein sequence ID" value="AEE28063.1"/>
    <property type="molecule type" value="Genomic_DNA"/>
</dbReference>
<dbReference type="EMBL" id="AY086055">
    <property type="protein sequence ID" value="AAM63265.1"/>
    <property type="status" value="ALT_INIT"/>
    <property type="molecule type" value="mRNA"/>
</dbReference>
<dbReference type="PIR" id="F86204">
    <property type="entry name" value="F86204"/>
</dbReference>
<dbReference type="RefSeq" id="NP_563774.1">
    <property type="nucleotide sequence ID" value="NM_100572.3"/>
</dbReference>
<dbReference type="SMR" id="Q9LMJ3"/>
<dbReference type="FunCoup" id="Q9LMJ3">
    <property type="interactions" value="96"/>
</dbReference>
<dbReference type="STRING" id="3702.Q9LMJ3"/>
<dbReference type="GlyGen" id="Q9LMJ3">
    <property type="glycosylation" value="5 sites"/>
</dbReference>
<dbReference type="PaxDb" id="3702-AT1G06990.1"/>
<dbReference type="ProteomicsDB" id="247086"/>
<dbReference type="EnsemblPlants" id="AT1G06990.1">
    <property type="protein sequence ID" value="AT1G06990.1"/>
    <property type="gene ID" value="AT1G06990"/>
</dbReference>
<dbReference type="GeneID" id="837209"/>
<dbReference type="Gramene" id="AT1G06990.1">
    <property type="protein sequence ID" value="AT1G06990.1"/>
    <property type="gene ID" value="AT1G06990"/>
</dbReference>
<dbReference type="KEGG" id="ath:AT1G06990"/>
<dbReference type="Araport" id="AT1G06990"/>
<dbReference type="TAIR" id="AT1G06990"/>
<dbReference type="eggNOG" id="ENOG502QSNM">
    <property type="taxonomic scope" value="Eukaryota"/>
</dbReference>
<dbReference type="HOGENOM" id="CLU_015101_0_1_1"/>
<dbReference type="InParanoid" id="Q9LMJ3"/>
<dbReference type="OMA" id="IQMTMAM"/>
<dbReference type="PhylomeDB" id="Q9LMJ3"/>
<dbReference type="BioCyc" id="ARA:AT1G06990-MONOMER"/>
<dbReference type="PRO" id="PR:Q9LMJ3"/>
<dbReference type="Proteomes" id="UP000006548">
    <property type="component" value="Chromosome 1"/>
</dbReference>
<dbReference type="ExpressionAtlas" id="Q9LMJ3">
    <property type="expression patterns" value="baseline and differential"/>
</dbReference>
<dbReference type="GO" id="GO:0005576">
    <property type="term" value="C:extracellular region"/>
    <property type="evidence" value="ECO:0007669"/>
    <property type="project" value="UniProtKB-SubCell"/>
</dbReference>
<dbReference type="GO" id="GO:0016788">
    <property type="term" value="F:hydrolase activity, acting on ester bonds"/>
    <property type="evidence" value="ECO:0007669"/>
    <property type="project" value="InterPro"/>
</dbReference>
<dbReference type="GO" id="GO:0016042">
    <property type="term" value="P:lipid catabolic process"/>
    <property type="evidence" value="ECO:0007669"/>
    <property type="project" value="UniProtKB-KW"/>
</dbReference>
<dbReference type="CDD" id="cd01837">
    <property type="entry name" value="SGNH_plant_lipase_like"/>
    <property type="match status" value="1"/>
</dbReference>
<dbReference type="FunFam" id="3.40.50.1110:FF:000003">
    <property type="entry name" value="GDSL esterase/lipase APG"/>
    <property type="match status" value="1"/>
</dbReference>
<dbReference type="Gene3D" id="3.40.50.1110">
    <property type="entry name" value="SGNH hydrolase"/>
    <property type="match status" value="1"/>
</dbReference>
<dbReference type="InterPro" id="IPR001087">
    <property type="entry name" value="GDSL"/>
</dbReference>
<dbReference type="InterPro" id="IPR050592">
    <property type="entry name" value="GDSL_lipolytic_enzyme"/>
</dbReference>
<dbReference type="InterPro" id="IPR036514">
    <property type="entry name" value="SGNH_hydro_sf"/>
</dbReference>
<dbReference type="InterPro" id="IPR035669">
    <property type="entry name" value="SGNH_plant_lipase-like"/>
</dbReference>
<dbReference type="PANTHER" id="PTHR45642">
    <property type="entry name" value="GDSL ESTERASE/LIPASE EXL3"/>
    <property type="match status" value="1"/>
</dbReference>
<dbReference type="PANTHER" id="PTHR45642:SF120">
    <property type="entry name" value="GDSL-LIKE LIPASE_ACYLHYDROLASE"/>
    <property type="match status" value="1"/>
</dbReference>
<dbReference type="Pfam" id="PF00657">
    <property type="entry name" value="Lipase_GDSL"/>
    <property type="match status" value="1"/>
</dbReference>
<dbReference type="SUPFAM" id="SSF52266">
    <property type="entry name" value="SGNH hydrolase"/>
    <property type="match status" value="1"/>
</dbReference>
<protein>
    <recommendedName>
        <fullName>GDSL esterase/lipase At1g06990</fullName>
        <ecNumber>3.1.1.-</ecNumber>
    </recommendedName>
    <alternativeName>
        <fullName>Extracellular lipase At1g06990</fullName>
    </alternativeName>
</protein>
<accession>Q9LMJ3</accession>
<accession>Q8LDE0</accession>
<evidence type="ECO:0000250" key="1"/>
<evidence type="ECO:0000255" key="2"/>
<evidence type="ECO:0000305" key="3"/>
<gene>
    <name type="ordered locus">At1g06990</name>
    <name type="ORF">F10K1.29</name>
</gene>
<reference key="1">
    <citation type="journal article" date="2000" name="Nature">
        <title>Sequence and analysis of chromosome 1 of the plant Arabidopsis thaliana.</title>
        <authorList>
            <person name="Theologis A."/>
            <person name="Ecker J.R."/>
            <person name="Palm C.J."/>
            <person name="Federspiel N.A."/>
            <person name="Kaul S."/>
            <person name="White O."/>
            <person name="Alonso J."/>
            <person name="Altafi H."/>
            <person name="Araujo R."/>
            <person name="Bowman C.L."/>
            <person name="Brooks S.Y."/>
            <person name="Buehler E."/>
            <person name="Chan A."/>
            <person name="Chao Q."/>
            <person name="Chen H."/>
            <person name="Cheuk R.F."/>
            <person name="Chin C.W."/>
            <person name="Chung M.K."/>
            <person name="Conn L."/>
            <person name="Conway A.B."/>
            <person name="Conway A.R."/>
            <person name="Creasy T.H."/>
            <person name="Dewar K."/>
            <person name="Dunn P."/>
            <person name="Etgu P."/>
            <person name="Feldblyum T.V."/>
            <person name="Feng J.-D."/>
            <person name="Fong B."/>
            <person name="Fujii C.Y."/>
            <person name="Gill J.E."/>
            <person name="Goldsmith A.D."/>
            <person name="Haas B."/>
            <person name="Hansen N.F."/>
            <person name="Hughes B."/>
            <person name="Huizar L."/>
            <person name="Hunter J.L."/>
            <person name="Jenkins J."/>
            <person name="Johnson-Hopson C."/>
            <person name="Khan S."/>
            <person name="Khaykin E."/>
            <person name="Kim C.J."/>
            <person name="Koo H.L."/>
            <person name="Kremenetskaia I."/>
            <person name="Kurtz D.B."/>
            <person name="Kwan A."/>
            <person name="Lam B."/>
            <person name="Langin-Hooper S."/>
            <person name="Lee A."/>
            <person name="Lee J.M."/>
            <person name="Lenz C.A."/>
            <person name="Li J.H."/>
            <person name="Li Y.-P."/>
            <person name="Lin X."/>
            <person name="Liu S.X."/>
            <person name="Liu Z.A."/>
            <person name="Luros J.S."/>
            <person name="Maiti R."/>
            <person name="Marziali A."/>
            <person name="Militscher J."/>
            <person name="Miranda M."/>
            <person name="Nguyen M."/>
            <person name="Nierman W.C."/>
            <person name="Osborne B.I."/>
            <person name="Pai G."/>
            <person name="Peterson J."/>
            <person name="Pham P.K."/>
            <person name="Rizzo M."/>
            <person name="Rooney T."/>
            <person name="Rowley D."/>
            <person name="Sakano H."/>
            <person name="Salzberg S.L."/>
            <person name="Schwartz J.R."/>
            <person name="Shinn P."/>
            <person name="Southwick A.M."/>
            <person name="Sun H."/>
            <person name="Tallon L.J."/>
            <person name="Tambunga G."/>
            <person name="Toriumi M.J."/>
            <person name="Town C.D."/>
            <person name="Utterback T."/>
            <person name="Van Aken S."/>
            <person name="Vaysberg M."/>
            <person name="Vysotskaia V.S."/>
            <person name="Walker M."/>
            <person name="Wu D."/>
            <person name="Yu G."/>
            <person name="Fraser C.M."/>
            <person name="Venter J.C."/>
            <person name="Davis R.W."/>
        </authorList>
    </citation>
    <scope>NUCLEOTIDE SEQUENCE [LARGE SCALE GENOMIC DNA]</scope>
    <source>
        <strain>cv. Columbia</strain>
    </source>
</reference>
<reference key="2">
    <citation type="journal article" date="2017" name="Plant J.">
        <title>Araport11: a complete reannotation of the Arabidopsis thaliana reference genome.</title>
        <authorList>
            <person name="Cheng C.Y."/>
            <person name="Krishnakumar V."/>
            <person name="Chan A.P."/>
            <person name="Thibaud-Nissen F."/>
            <person name="Schobel S."/>
            <person name="Town C.D."/>
        </authorList>
    </citation>
    <scope>GENOME REANNOTATION</scope>
    <source>
        <strain>cv. Columbia</strain>
    </source>
</reference>
<reference key="3">
    <citation type="submission" date="2002-03" db="EMBL/GenBank/DDBJ databases">
        <title>Full-length cDNA from Arabidopsis thaliana.</title>
        <authorList>
            <person name="Brover V.V."/>
            <person name="Troukhan M.E."/>
            <person name="Alexandrov N.A."/>
            <person name="Lu Y.-P."/>
            <person name="Flavell R.B."/>
            <person name="Feldmann K.A."/>
        </authorList>
    </citation>
    <scope>NUCLEOTIDE SEQUENCE [LARGE SCALE MRNA]</scope>
</reference>
<reference key="4">
    <citation type="journal article" date="2004" name="Prog. Lipid Res.">
        <title>GDSL family of serine esterases/lipases.</title>
        <authorList>
            <person name="Akoh C.C."/>
            <person name="Lee G.-C."/>
            <person name="Liaw Y.-C."/>
            <person name="Huang T.-H."/>
            <person name="Shaw J.-F."/>
        </authorList>
    </citation>
    <scope>REVIEW</scope>
</reference>
<reference key="5">
    <citation type="journal article" date="2008" name="Pak. J. Biol. Sci.">
        <title>Sequence analysis of GDSL lipase gene family in Arabidopsis thaliana.</title>
        <authorList>
            <person name="Ling H."/>
        </authorList>
    </citation>
    <scope>GENE FAMILY</scope>
</reference>
<feature type="signal peptide" evidence="2">
    <location>
        <begin position="1"/>
        <end position="22"/>
    </location>
</feature>
<feature type="chain" id="PRO_0000367343" description="GDSL esterase/lipase At1g06990">
    <location>
        <begin position="23"/>
        <end position="360"/>
    </location>
</feature>
<feature type="active site" description="Nucleophile" evidence="1">
    <location>
        <position position="44"/>
    </location>
</feature>
<feature type="active site" evidence="1">
    <location>
        <position position="335"/>
    </location>
</feature>
<feature type="active site" evidence="1">
    <location>
        <position position="338"/>
    </location>
</feature>
<feature type="glycosylation site" description="N-linked (GlcNAc...) asparagine" evidence="2">
    <location>
        <position position="26"/>
    </location>
</feature>
<feature type="glycosylation site" description="N-linked (GlcNAc...) asparagine" evidence="2">
    <location>
        <position position="31"/>
    </location>
</feature>
<feature type="glycosylation site" description="N-linked (GlcNAc...) asparagine" evidence="2">
    <location>
        <position position="73"/>
    </location>
</feature>
<feature type="glycosylation site" description="N-linked (GlcNAc...) asparagine" evidence="2">
    <location>
        <position position="126"/>
    </location>
</feature>
<feature type="glycosylation site" description="N-linked (GlcNAc...) asparagine" evidence="2">
    <location>
        <position position="272"/>
    </location>
</feature>
<feature type="sequence conflict" description="In Ref. 3; AAM63265." evidence="3" ref="3">
    <original>C</original>
    <variation>S</variation>
    <location>
        <position position="306"/>
    </location>
</feature>
<comment type="subcellular location">
    <subcellularLocation>
        <location evidence="3">Secreted</location>
    </subcellularLocation>
</comment>
<comment type="similarity">
    <text evidence="3">Belongs to the 'GDSL' lipolytic enzyme family.</text>
</comment>
<comment type="sequence caution" evidence="3">
    <conflict type="erroneous initiation">
        <sequence resource="EMBL-CDS" id="AAF82220"/>
    </conflict>
</comment>
<comment type="sequence caution" evidence="3">
    <conflict type="erroneous initiation">
        <sequence resource="EMBL-CDS" id="AAM63265"/>
    </conflict>
</comment>
<sequence>MLIHVIIFMIITTMQFSTTCHAYVINVTNVNVSMFPAILVFGDSTIDTGNNNYIKTYIRANFPPYGCNFPGHNATGRFSNGKLIPDFIASLMGIKDTVPPFLDPHLSDSDIITGVCFASAGSGYDNLTDRATSTLSVDKQADMLRSYVERLSQIVGDEKAASIVSEALVIVSSGTNDFNLNLYDTPSRRQKLGVDGYQSFILSNVHNFVQELYDIGCRKIMVLGLPPVGCLPIQMTMAMQKQNERRCIDKQNSDSQEFNQKLKNSLTEMQSNLTGSVIFYGDIYGALFDMATNPQRYGLKETTRGCCGTGEIELAYLCNALTRICPNPNQYLFWDDIHPSQIAYIVISLSLVEQIFHVLS</sequence>
<organism>
    <name type="scientific">Arabidopsis thaliana</name>
    <name type="common">Mouse-ear cress</name>
    <dbReference type="NCBI Taxonomy" id="3702"/>
    <lineage>
        <taxon>Eukaryota</taxon>
        <taxon>Viridiplantae</taxon>
        <taxon>Streptophyta</taxon>
        <taxon>Embryophyta</taxon>
        <taxon>Tracheophyta</taxon>
        <taxon>Spermatophyta</taxon>
        <taxon>Magnoliopsida</taxon>
        <taxon>eudicotyledons</taxon>
        <taxon>Gunneridae</taxon>
        <taxon>Pentapetalae</taxon>
        <taxon>rosids</taxon>
        <taxon>malvids</taxon>
        <taxon>Brassicales</taxon>
        <taxon>Brassicaceae</taxon>
        <taxon>Camelineae</taxon>
        <taxon>Arabidopsis</taxon>
    </lineage>
</organism>
<keyword id="KW-0325">Glycoprotein</keyword>
<keyword id="KW-0378">Hydrolase</keyword>
<keyword id="KW-0442">Lipid degradation</keyword>
<keyword id="KW-0443">Lipid metabolism</keyword>
<keyword id="KW-1185">Reference proteome</keyword>
<keyword id="KW-0964">Secreted</keyword>
<keyword id="KW-0732">Signal</keyword>